<sequence>MRRIYAAWTLVAAAGVMDCSPRLEKAAAFTLGPDSQVIVFPFMFQGYNIVVLPTTKYGDLKGNARRRVASFLEHNISHAVWYFVVGGIAYKDDRSERLFSEMMDGYLKKISAGASKVYKGGRKMFSESLETVHEMIFECNKAGDGHVVKYGKSIINRLSDMIENAPTGISAEEKREYRRFWSRVKERAGFLYSTERLRRVVEVEKIVCNACKEICLKLKEEELMGLLAEGKMKKDLKATVDEDEIGHCLYLEYTVVNTSLLLDAHREHGGDVTRELVKQMLLGKKGDEIDRRYINKVANVVKERQRREMEKKEEEKKKEEEKKKEEEKRKEEKKKKKEEKKEEKKKKKEEKKEEKKEEKKEEKKEEKKEEKKEEKKEEKSGKSLREGEASEEAEMPSVEVGGARRKTGKKSEGGRKRYKIHRRVSRWRKSPEKIKEEWDKGSEEKWRGRSLEEIKEQKVFHDIMGVLELLRSEDADKFFIDTGDYTKGGSERQRMVAIGVLESGGKRMAGVVEVGTFKDSSSGCPVVYHLMFRVTGIEGMGDVMSPEFAEANDIEKIDKNREYQDEGMFVYPRGVRFETVKETDAFQIVWGNPSNTSKVLRRLTIQRRPYVI</sequence>
<gene>
    <name type="ordered locus">ECU05_1680</name>
</gene>
<gene>
    <name type="ordered locus">ECU11_0050</name>
</gene>
<comment type="similarity">
    <text evidence="2">Belongs to the UPF0329 family.</text>
</comment>
<feature type="chain" id="PRO_0000223160" description="UPF0329 protein ECU05_1680/ECU11_0050">
    <location>
        <begin position="1"/>
        <end position="612"/>
    </location>
</feature>
<feature type="region of interest" description="Disordered" evidence="1">
    <location>
        <begin position="304"/>
        <end position="424"/>
    </location>
</feature>
<feature type="compositionally biased region" description="Basic and acidic residues" evidence="1">
    <location>
        <begin position="304"/>
        <end position="330"/>
    </location>
</feature>
<feature type="compositionally biased region" description="Basic residues" evidence="1">
    <location>
        <begin position="331"/>
        <end position="349"/>
    </location>
</feature>
<feature type="compositionally biased region" description="Basic and acidic residues" evidence="1">
    <location>
        <begin position="350"/>
        <end position="388"/>
    </location>
</feature>
<organism>
    <name type="scientific">Encephalitozoon cuniculi (strain GB-M1)</name>
    <name type="common">Microsporidian parasite</name>
    <dbReference type="NCBI Taxonomy" id="284813"/>
    <lineage>
        <taxon>Eukaryota</taxon>
        <taxon>Fungi</taxon>
        <taxon>Fungi incertae sedis</taxon>
        <taxon>Microsporidia</taxon>
        <taxon>Unikaryonidae</taxon>
        <taxon>Encephalitozoon</taxon>
    </lineage>
</organism>
<accession>Q8STA9</accession>
<evidence type="ECO:0000256" key="1">
    <source>
        <dbReference type="SAM" id="MobiDB-lite"/>
    </source>
</evidence>
<evidence type="ECO:0000305" key="2"/>
<name>Y5G8_ENCCU</name>
<dbReference type="EMBL" id="AL590445">
    <property type="protein sequence ID" value="CAD26688.1"/>
    <property type="molecule type" value="Genomic_DNA"/>
</dbReference>
<dbReference type="EMBL" id="AL590450">
    <property type="protein sequence ID" value="CAD25915.1"/>
    <property type="molecule type" value="Genomic_DNA"/>
</dbReference>
<dbReference type="RefSeq" id="NP_586311.1">
    <property type="nucleotide sequence ID" value="NM_001042144.1"/>
</dbReference>
<dbReference type="RefSeq" id="NP_597511.1">
    <property type="nucleotide sequence ID" value="NM_001041377.1"/>
</dbReference>
<dbReference type="STRING" id="284813.Q8STA9"/>
<dbReference type="GeneID" id="859178"/>
<dbReference type="GeneID" id="859962"/>
<dbReference type="KEGG" id="ecu:ECU05_1680"/>
<dbReference type="KEGG" id="ecu:ECU11_0050"/>
<dbReference type="VEuPathDB" id="MicrosporidiaDB:ECU05_1680"/>
<dbReference type="VEuPathDB" id="MicrosporidiaDB:ECU11_0050"/>
<dbReference type="HOGENOM" id="CLU_035434_0_0_1"/>
<dbReference type="InParanoid" id="Q8STA9"/>
<dbReference type="OrthoDB" id="14677at6029"/>
<dbReference type="Proteomes" id="UP000000819">
    <property type="component" value="Chromosome V"/>
</dbReference>
<dbReference type="Proteomes" id="UP000000819">
    <property type="component" value="Chromosome XI"/>
</dbReference>
<dbReference type="InterPro" id="IPR022115">
    <property type="entry name" value="DUF3654"/>
</dbReference>
<dbReference type="InterPro" id="IPR011667">
    <property type="entry name" value="UPF0329"/>
</dbReference>
<dbReference type="Pfam" id="PF07753">
    <property type="entry name" value="DUF1609"/>
    <property type="match status" value="1"/>
</dbReference>
<dbReference type="Pfam" id="PF12376">
    <property type="entry name" value="DUF3654"/>
    <property type="match status" value="1"/>
</dbReference>
<reference key="1">
    <citation type="journal article" date="2001" name="Nature">
        <title>Genome sequence and gene compaction of the eukaryote parasite Encephalitozoon cuniculi.</title>
        <authorList>
            <person name="Katinka M.D."/>
            <person name="Duprat S."/>
            <person name="Cornillot E."/>
            <person name="Metenier G."/>
            <person name="Thomarat F."/>
            <person name="Prensier G."/>
            <person name="Barbe V."/>
            <person name="Peyretaillade E."/>
            <person name="Brottier P."/>
            <person name="Wincker P."/>
            <person name="Delbac F."/>
            <person name="El Alaoui H."/>
            <person name="Peyret P."/>
            <person name="Saurin W."/>
            <person name="Gouy M."/>
            <person name="Weissenbach J."/>
            <person name="Vivares C.P."/>
        </authorList>
    </citation>
    <scope>NUCLEOTIDE SEQUENCE [LARGE SCALE GENOMIC DNA]</scope>
    <source>
        <strain>GB-M1</strain>
    </source>
</reference>
<proteinExistence type="inferred from homology"/>
<protein>
    <recommendedName>
        <fullName>UPF0329 protein ECU05_1680/ECU11_0050</fullName>
    </recommendedName>
</protein>
<keyword id="KW-1185">Reference proteome</keyword>